<reference key="1">
    <citation type="submission" date="2005-07" db="EMBL/GenBank/DDBJ databases">
        <title>Complete sequence of Synechococcus sp. CC9605.</title>
        <authorList>
            <consortium name="US DOE Joint Genome Institute"/>
            <person name="Copeland A."/>
            <person name="Lucas S."/>
            <person name="Lapidus A."/>
            <person name="Barry K."/>
            <person name="Detter J.C."/>
            <person name="Glavina T."/>
            <person name="Hammon N."/>
            <person name="Israni S."/>
            <person name="Pitluck S."/>
            <person name="Schmutz J."/>
            <person name="Martinez M."/>
            <person name="Larimer F."/>
            <person name="Land M."/>
            <person name="Kyrpides N."/>
            <person name="Ivanova N."/>
            <person name="Richardson P."/>
        </authorList>
    </citation>
    <scope>NUCLEOTIDE SEQUENCE [LARGE SCALE GENOMIC DNA]</scope>
    <source>
        <strain>CC9605</strain>
    </source>
</reference>
<feature type="chain" id="PRO_0000334829" description="Leucine--tRNA ligase">
    <location>
        <begin position="1"/>
        <end position="875"/>
    </location>
</feature>
<feature type="region of interest" description="Disordered" evidence="2">
    <location>
        <begin position="1"/>
        <end position="22"/>
    </location>
</feature>
<feature type="short sequence motif" description="'HIGH' region">
    <location>
        <begin position="60"/>
        <end position="70"/>
    </location>
</feature>
<feature type="short sequence motif" description="'KMSKS' region">
    <location>
        <begin position="634"/>
        <end position="638"/>
    </location>
</feature>
<feature type="compositionally biased region" description="Polar residues" evidence="2">
    <location>
        <begin position="1"/>
        <end position="20"/>
    </location>
</feature>
<feature type="binding site" evidence="1">
    <location>
        <position position="637"/>
    </location>
    <ligand>
        <name>ATP</name>
        <dbReference type="ChEBI" id="CHEBI:30616"/>
    </ligand>
</feature>
<protein>
    <recommendedName>
        <fullName evidence="1">Leucine--tRNA ligase</fullName>
        <ecNumber evidence="1">6.1.1.4</ecNumber>
    </recommendedName>
    <alternativeName>
        <fullName evidence="1">Leucyl-tRNA synthetase</fullName>
        <shortName evidence="1">LeuRS</shortName>
    </alternativeName>
</protein>
<proteinExistence type="inferred from homology"/>
<sequence length="875" mass="96528">MPSAGSVNAANPAVDTSAQTGRYDPTALEQRWQESWKADGVDTTEVGGEKPGFFALSMFPYPSGSLHMGHVRNYVITDVIARVQRMLGHAVLHPMGWDAFGLPAENAAIERNVDPGEWTDRNIDQMRAQLDRLGLSIDWSREQATCHSDYYRWTQWLFLELLEGGLAYRKNATVNWDPVDQTVLANEQVDGDGRSWRSGALVEQRQLNQWFLRITDYAEPLLNDLDALKGWPERVRTMQANWIGRSEGAEISFNVEGAQNQTITVFTTRPDTLAGASYVVLAPENELVDSLSSEEQKDTVEAFRKEVARLSTIERTCDDRPKRGVPIGSHVINPLTGVVLPVWIADYVLAEYGTGAVMGVPAHDQRDIAFAQSNGLPIQQVIDAEGAAEAIAAGQAWTDAGTLVNSGSFDGTASSEAKGAITGHGAEQGWARSKVTYRLRDWLISRQRYWGCPIPVIHCDNCGAVPVPREDLPVELPRGIDLSGKGGSPLSQQSDWVNVACPRCGKPAKRETDTMDTFMCSSWYFLRFADPHNTEKPFSKEAVNRWLPVKQYVGGIEHAILHLLYARFFTKALKDRGLIDINEPFERLLTQGMVQGVTYRNATTGKYIAPADVADAEDPRDPNTGDKLEVLFEKMSKSKYNGVDPAAVIDRYGADTARMFILFKAPPEKDLEWDDADVEGQFRFLQRLWRLVEAGSARIDSLEPMQRPADLSDADSDVRRALHLAIEAVSEDLSDEIQLNTAISELMKLSNAISSTGIDALSAPVLQEALSGLVRLLAPFAPHLAEEFWNRLGGSGSVHRQSWPVLDPTALVQDSVEVVIQVKGKVRGKLQVPASAGKEELERLALASDVAEKWLEGAAPRRVIVVPGKLVNLVP</sequence>
<name>SYL_SYNSC</name>
<organism>
    <name type="scientific">Synechococcus sp. (strain CC9605)</name>
    <dbReference type="NCBI Taxonomy" id="110662"/>
    <lineage>
        <taxon>Bacteria</taxon>
        <taxon>Bacillati</taxon>
        <taxon>Cyanobacteriota</taxon>
        <taxon>Cyanophyceae</taxon>
        <taxon>Synechococcales</taxon>
        <taxon>Synechococcaceae</taxon>
        <taxon>Synechococcus</taxon>
    </lineage>
</organism>
<dbReference type="EC" id="6.1.1.4" evidence="1"/>
<dbReference type="EMBL" id="CP000110">
    <property type="protein sequence ID" value="ABB35134.1"/>
    <property type="molecule type" value="Genomic_DNA"/>
</dbReference>
<dbReference type="SMR" id="Q3AJU8"/>
<dbReference type="STRING" id="110662.Syncc9605_1380"/>
<dbReference type="KEGG" id="syd:Syncc9605_1380"/>
<dbReference type="eggNOG" id="COG0495">
    <property type="taxonomic scope" value="Bacteria"/>
</dbReference>
<dbReference type="HOGENOM" id="CLU_004427_0_0_3"/>
<dbReference type="OrthoDB" id="9810365at2"/>
<dbReference type="GO" id="GO:0005829">
    <property type="term" value="C:cytosol"/>
    <property type="evidence" value="ECO:0007669"/>
    <property type="project" value="TreeGrafter"/>
</dbReference>
<dbReference type="GO" id="GO:0002161">
    <property type="term" value="F:aminoacyl-tRNA deacylase activity"/>
    <property type="evidence" value="ECO:0007669"/>
    <property type="project" value="InterPro"/>
</dbReference>
<dbReference type="GO" id="GO:0005524">
    <property type="term" value="F:ATP binding"/>
    <property type="evidence" value="ECO:0007669"/>
    <property type="project" value="UniProtKB-UniRule"/>
</dbReference>
<dbReference type="GO" id="GO:0004823">
    <property type="term" value="F:leucine-tRNA ligase activity"/>
    <property type="evidence" value="ECO:0007669"/>
    <property type="project" value="UniProtKB-UniRule"/>
</dbReference>
<dbReference type="GO" id="GO:0006429">
    <property type="term" value="P:leucyl-tRNA aminoacylation"/>
    <property type="evidence" value="ECO:0007669"/>
    <property type="project" value="UniProtKB-UniRule"/>
</dbReference>
<dbReference type="CDD" id="cd07958">
    <property type="entry name" value="Anticodon_Ia_Leu_BEm"/>
    <property type="match status" value="1"/>
</dbReference>
<dbReference type="CDD" id="cd00812">
    <property type="entry name" value="LeuRS_core"/>
    <property type="match status" value="1"/>
</dbReference>
<dbReference type="FunFam" id="3.10.20.590:FF:000001">
    <property type="entry name" value="Leucine--tRNA ligase"/>
    <property type="match status" value="1"/>
</dbReference>
<dbReference type="FunFam" id="3.40.50.620:FF:000003">
    <property type="entry name" value="Leucine--tRNA ligase"/>
    <property type="match status" value="1"/>
</dbReference>
<dbReference type="FunFam" id="1.10.730.10:FF:000011">
    <property type="entry name" value="Leucine--tRNA ligase chloroplastic/mitochondrial"/>
    <property type="match status" value="1"/>
</dbReference>
<dbReference type="FunFam" id="3.40.50.620:FF:000100">
    <property type="entry name" value="probable leucine--tRNA ligase, mitochondrial"/>
    <property type="match status" value="1"/>
</dbReference>
<dbReference type="Gene3D" id="3.40.50.620">
    <property type="entry name" value="HUPs"/>
    <property type="match status" value="2"/>
</dbReference>
<dbReference type="Gene3D" id="1.10.730.10">
    <property type="entry name" value="Isoleucyl-tRNA Synthetase, Domain 1"/>
    <property type="match status" value="1"/>
</dbReference>
<dbReference type="HAMAP" id="MF_00049_B">
    <property type="entry name" value="Leu_tRNA_synth_B"/>
    <property type="match status" value="1"/>
</dbReference>
<dbReference type="InterPro" id="IPR001412">
    <property type="entry name" value="aa-tRNA-synth_I_CS"/>
</dbReference>
<dbReference type="InterPro" id="IPR002300">
    <property type="entry name" value="aa-tRNA-synth_Ia"/>
</dbReference>
<dbReference type="InterPro" id="IPR002302">
    <property type="entry name" value="Leu-tRNA-ligase"/>
</dbReference>
<dbReference type="InterPro" id="IPR025709">
    <property type="entry name" value="Leu_tRNA-synth_edit"/>
</dbReference>
<dbReference type="InterPro" id="IPR013155">
    <property type="entry name" value="M/V/L/I-tRNA-synth_anticd-bd"/>
</dbReference>
<dbReference type="InterPro" id="IPR015413">
    <property type="entry name" value="Methionyl/Leucyl_tRNA_Synth"/>
</dbReference>
<dbReference type="InterPro" id="IPR014729">
    <property type="entry name" value="Rossmann-like_a/b/a_fold"/>
</dbReference>
<dbReference type="InterPro" id="IPR009080">
    <property type="entry name" value="tRNAsynth_Ia_anticodon-bd"/>
</dbReference>
<dbReference type="InterPro" id="IPR009008">
    <property type="entry name" value="Val/Leu/Ile-tRNA-synth_edit"/>
</dbReference>
<dbReference type="NCBIfam" id="TIGR00396">
    <property type="entry name" value="leuS_bact"/>
    <property type="match status" value="1"/>
</dbReference>
<dbReference type="PANTHER" id="PTHR43740:SF2">
    <property type="entry name" value="LEUCINE--TRNA LIGASE, MITOCHONDRIAL"/>
    <property type="match status" value="1"/>
</dbReference>
<dbReference type="PANTHER" id="PTHR43740">
    <property type="entry name" value="LEUCYL-TRNA SYNTHETASE"/>
    <property type="match status" value="1"/>
</dbReference>
<dbReference type="Pfam" id="PF08264">
    <property type="entry name" value="Anticodon_1"/>
    <property type="match status" value="1"/>
</dbReference>
<dbReference type="Pfam" id="PF00133">
    <property type="entry name" value="tRNA-synt_1"/>
    <property type="match status" value="2"/>
</dbReference>
<dbReference type="Pfam" id="PF13603">
    <property type="entry name" value="tRNA-synt_1_2"/>
    <property type="match status" value="1"/>
</dbReference>
<dbReference type="Pfam" id="PF09334">
    <property type="entry name" value="tRNA-synt_1g"/>
    <property type="match status" value="1"/>
</dbReference>
<dbReference type="PRINTS" id="PR00985">
    <property type="entry name" value="TRNASYNTHLEU"/>
</dbReference>
<dbReference type="SUPFAM" id="SSF47323">
    <property type="entry name" value="Anticodon-binding domain of a subclass of class I aminoacyl-tRNA synthetases"/>
    <property type="match status" value="1"/>
</dbReference>
<dbReference type="SUPFAM" id="SSF52374">
    <property type="entry name" value="Nucleotidylyl transferase"/>
    <property type="match status" value="1"/>
</dbReference>
<dbReference type="SUPFAM" id="SSF50677">
    <property type="entry name" value="ValRS/IleRS/LeuRS editing domain"/>
    <property type="match status" value="1"/>
</dbReference>
<dbReference type="PROSITE" id="PS00178">
    <property type="entry name" value="AA_TRNA_LIGASE_I"/>
    <property type="match status" value="1"/>
</dbReference>
<accession>Q3AJU8</accession>
<keyword id="KW-0030">Aminoacyl-tRNA synthetase</keyword>
<keyword id="KW-0067">ATP-binding</keyword>
<keyword id="KW-0963">Cytoplasm</keyword>
<keyword id="KW-0436">Ligase</keyword>
<keyword id="KW-0547">Nucleotide-binding</keyword>
<keyword id="KW-0648">Protein biosynthesis</keyword>
<evidence type="ECO:0000255" key="1">
    <source>
        <dbReference type="HAMAP-Rule" id="MF_00049"/>
    </source>
</evidence>
<evidence type="ECO:0000256" key="2">
    <source>
        <dbReference type="SAM" id="MobiDB-lite"/>
    </source>
</evidence>
<gene>
    <name evidence="1" type="primary">leuS</name>
    <name type="ordered locus">Syncc9605_1380</name>
</gene>
<comment type="catalytic activity">
    <reaction evidence="1">
        <text>tRNA(Leu) + L-leucine + ATP = L-leucyl-tRNA(Leu) + AMP + diphosphate</text>
        <dbReference type="Rhea" id="RHEA:11688"/>
        <dbReference type="Rhea" id="RHEA-COMP:9613"/>
        <dbReference type="Rhea" id="RHEA-COMP:9622"/>
        <dbReference type="ChEBI" id="CHEBI:30616"/>
        <dbReference type="ChEBI" id="CHEBI:33019"/>
        <dbReference type="ChEBI" id="CHEBI:57427"/>
        <dbReference type="ChEBI" id="CHEBI:78442"/>
        <dbReference type="ChEBI" id="CHEBI:78494"/>
        <dbReference type="ChEBI" id="CHEBI:456215"/>
        <dbReference type="EC" id="6.1.1.4"/>
    </reaction>
</comment>
<comment type="subcellular location">
    <subcellularLocation>
        <location evidence="1">Cytoplasm</location>
    </subcellularLocation>
</comment>
<comment type="similarity">
    <text evidence="1">Belongs to the class-I aminoacyl-tRNA synthetase family.</text>
</comment>